<gene>
    <name type="ordered locus">glr0978</name>
</gene>
<name>Y978_GLOVI</name>
<comment type="similarity">
    <text evidence="1">Belongs to the UPF0332 family.</text>
</comment>
<feature type="chain" id="PRO_0000159638" description="UPF0332 protein glr0978">
    <location>
        <begin position="1"/>
        <end position="126"/>
    </location>
</feature>
<sequence>MTPEQQDLMDRAEQSLQAARILADEALFDVSVSRSYYAMFYCARASLLALNLSSKSHSGTISLFGQHLAAAGRLPIEIHRQLIDAERLRILGDYGGANSHCSQQDAQVLIAQSARFMQIAMEFLAQ</sequence>
<organism>
    <name type="scientific">Gloeobacter violaceus (strain ATCC 29082 / PCC 7421)</name>
    <dbReference type="NCBI Taxonomy" id="251221"/>
    <lineage>
        <taxon>Bacteria</taxon>
        <taxon>Bacillati</taxon>
        <taxon>Cyanobacteriota</taxon>
        <taxon>Cyanophyceae</taxon>
        <taxon>Gloeobacterales</taxon>
        <taxon>Gloeobacteraceae</taxon>
        <taxon>Gloeobacter</taxon>
    </lineage>
</organism>
<proteinExistence type="inferred from homology"/>
<dbReference type="EMBL" id="BA000045">
    <property type="protein sequence ID" value="BAC88919.1"/>
    <property type="molecule type" value="Genomic_DNA"/>
</dbReference>
<dbReference type="RefSeq" id="NP_923924.1">
    <property type="nucleotide sequence ID" value="NC_005125.1"/>
</dbReference>
<dbReference type="RefSeq" id="WP_011140980.1">
    <property type="nucleotide sequence ID" value="NC_005125.1"/>
</dbReference>
<dbReference type="SMR" id="Q7NLZ1"/>
<dbReference type="STRING" id="251221.gene:10758456"/>
<dbReference type="EnsemblBacteria" id="BAC88919">
    <property type="protein sequence ID" value="BAC88919"/>
    <property type="gene ID" value="BAC88919"/>
</dbReference>
<dbReference type="KEGG" id="gvi:glr0978"/>
<dbReference type="PATRIC" id="fig|251221.4.peg.999"/>
<dbReference type="eggNOG" id="COG1895">
    <property type="taxonomic scope" value="Bacteria"/>
</dbReference>
<dbReference type="HOGENOM" id="CLU_151247_2_1_3"/>
<dbReference type="InParanoid" id="Q7NLZ1"/>
<dbReference type="OrthoDB" id="5767335at2"/>
<dbReference type="PhylomeDB" id="Q7NLZ1"/>
<dbReference type="Proteomes" id="UP000000557">
    <property type="component" value="Chromosome"/>
</dbReference>
<dbReference type="Gene3D" id="1.20.120.330">
    <property type="entry name" value="Nucleotidyltransferases domain 2"/>
    <property type="match status" value="1"/>
</dbReference>
<dbReference type="InterPro" id="IPR007842">
    <property type="entry name" value="HEPN_dom"/>
</dbReference>
<dbReference type="InterPro" id="IPR052226">
    <property type="entry name" value="UPF0332_toxin"/>
</dbReference>
<dbReference type="PANTHER" id="PTHR36565">
    <property type="entry name" value="UPF0332 PROTEIN TM_1000"/>
    <property type="match status" value="1"/>
</dbReference>
<dbReference type="PANTHER" id="PTHR36565:SF1">
    <property type="entry name" value="UPF0332 PROTEIN TM_1000"/>
    <property type="match status" value="1"/>
</dbReference>
<dbReference type="Pfam" id="PF05168">
    <property type="entry name" value="HEPN"/>
    <property type="match status" value="1"/>
</dbReference>
<keyword id="KW-1185">Reference proteome</keyword>
<reference key="1">
    <citation type="journal article" date="2003" name="DNA Res.">
        <title>Complete genome structure of Gloeobacter violaceus PCC 7421, a cyanobacterium that lacks thylakoids.</title>
        <authorList>
            <person name="Nakamura Y."/>
            <person name="Kaneko T."/>
            <person name="Sato S."/>
            <person name="Mimuro M."/>
            <person name="Miyashita H."/>
            <person name="Tsuchiya T."/>
            <person name="Sasamoto S."/>
            <person name="Watanabe A."/>
            <person name="Kawashima K."/>
            <person name="Kishida Y."/>
            <person name="Kiyokawa C."/>
            <person name="Kohara M."/>
            <person name="Matsumoto M."/>
            <person name="Matsuno A."/>
            <person name="Nakazaki N."/>
            <person name="Shimpo S."/>
            <person name="Takeuchi C."/>
            <person name="Yamada M."/>
            <person name="Tabata S."/>
        </authorList>
    </citation>
    <scope>NUCLEOTIDE SEQUENCE [LARGE SCALE GENOMIC DNA]</scope>
    <source>
        <strain>ATCC 29082 / PCC 7421</strain>
    </source>
</reference>
<protein>
    <recommendedName>
        <fullName>UPF0332 protein glr0978</fullName>
    </recommendedName>
</protein>
<evidence type="ECO:0000305" key="1"/>
<accession>Q7NLZ1</accession>